<feature type="chain" id="PRO_1000184638" description="ATP synthase subunit delta">
    <location>
        <begin position="1"/>
        <end position="193"/>
    </location>
</feature>
<gene>
    <name evidence="1" type="primary">atpH</name>
    <name type="ordered locus">Avi_4110</name>
</gene>
<comment type="function">
    <text evidence="1">F(1)F(0) ATP synthase produces ATP from ADP in the presence of a proton or sodium gradient. F-type ATPases consist of two structural domains, F(1) containing the extramembraneous catalytic core and F(0) containing the membrane proton channel, linked together by a central stalk and a peripheral stalk. During catalysis, ATP synthesis in the catalytic domain of F(1) is coupled via a rotary mechanism of the central stalk subunits to proton translocation.</text>
</comment>
<comment type="function">
    <text evidence="1">This protein is part of the stalk that links CF(0) to CF(1). It either transmits conformational changes from CF(0) to CF(1) or is implicated in proton conduction.</text>
</comment>
<comment type="subunit">
    <text evidence="1">F-type ATPases have 2 components, F(1) - the catalytic core - and F(0) - the membrane proton channel. F(1) has five subunits: alpha(3), beta(3), gamma(1), delta(1), epsilon(1). F(0) has three main subunits: a(1), b(2) and c(10-14). The alpha and beta chains form an alternating ring which encloses part of the gamma chain. F(1) is attached to F(0) by a central stalk formed by the gamma and epsilon chains, while a peripheral stalk is formed by the delta and b chains.</text>
</comment>
<comment type="subcellular location">
    <subcellularLocation>
        <location evidence="1">Cell inner membrane</location>
        <topology evidence="1">Peripheral membrane protein</topology>
    </subcellularLocation>
</comment>
<comment type="similarity">
    <text evidence="1">Belongs to the ATPase delta chain family.</text>
</comment>
<name>ATPD_ALLAM</name>
<evidence type="ECO:0000255" key="1">
    <source>
        <dbReference type="HAMAP-Rule" id="MF_01416"/>
    </source>
</evidence>
<dbReference type="EMBL" id="CP000633">
    <property type="protein sequence ID" value="ACM37973.1"/>
    <property type="molecule type" value="Genomic_DNA"/>
</dbReference>
<dbReference type="SMR" id="B9JTR5"/>
<dbReference type="STRING" id="311402.Avi_4110"/>
<dbReference type="DNASU" id="7388904"/>
<dbReference type="KEGG" id="avi:Avi_4110"/>
<dbReference type="eggNOG" id="COG0712">
    <property type="taxonomic scope" value="Bacteria"/>
</dbReference>
<dbReference type="HOGENOM" id="CLU_085114_0_1_5"/>
<dbReference type="Proteomes" id="UP000001596">
    <property type="component" value="Chromosome 1"/>
</dbReference>
<dbReference type="GO" id="GO:0005886">
    <property type="term" value="C:plasma membrane"/>
    <property type="evidence" value="ECO:0007669"/>
    <property type="project" value="UniProtKB-SubCell"/>
</dbReference>
<dbReference type="GO" id="GO:0045259">
    <property type="term" value="C:proton-transporting ATP synthase complex"/>
    <property type="evidence" value="ECO:0007669"/>
    <property type="project" value="UniProtKB-KW"/>
</dbReference>
<dbReference type="GO" id="GO:0046933">
    <property type="term" value="F:proton-transporting ATP synthase activity, rotational mechanism"/>
    <property type="evidence" value="ECO:0007669"/>
    <property type="project" value="UniProtKB-UniRule"/>
</dbReference>
<dbReference type="Gene3D" id="1.10.520.20">
    <property type="entry name" value="N-terminal domain of the delta subunit of the F1F0-ATP synthase"/>
    <property type="match status" value="1"/>
</dbReference>
<dbReference type="HAMAP" id="MF_01416">
    <property type="entry name" value="ATP_synth_delta_bact"/>
    <property type="match status" value="1"/>
</dbReference>
<dbReference type="InterPro" id="IPR026015">
    <property type="entry name" value="ATP_synth_OSCP/delta_N_sf"/>
</dbReference>
<dbReference type="InterPro" id="IPR020781">
    <property type="entry name" value="ATPase_OSCP/d_CS"/>
</dbReference>
<dbReference type="InterPro" id="IPR000711">
    <property type="entry name" value="ATPase_OSCP/dsu"/>
</dbReference>
<dbReference type="NCBIfam" id="TIGR01145">
    <property type="entry name" value="ATP_synt_delta"/>
    <property type="match status" value="1"/>
</dbReference>
<dbReference type="NCBIfam" id="NF004402">
    <property type="entry name" value="PRK05758.2-2"/>
    <property type="match status" value="1"/>
</dbReference>
<dbReference type="NCBIfam" id="NF004406">
    <property type="entry name" value="PRK05758.3-2"/>
    <property type="match status" value="1"/>
</dbReference>
<dbReference type="PANTHER" id="PTHR11910">
    <property type="entry name" value="ATP SYNTHASE DELTA CHAIN"/>
    <property type="match status" value="1"/>
</dbReference>
<dbReference type="Pfam" id="PF00213">
    <property type="entry name" value="OSCP"/>
    <property type="match status" value="1"/>
</dbReference>
<dbReference type="PRINTS" id="PR00125">
    <property type="entry name" value="ATPASEDELTA"/>
</dbReference>
<dbReference type="SUPFAM" id="SSF47928">
    <property type="entry name" value="N-terminal domain of the delta subunit of the F1F0-ATP synthase"/>
    <property type="match status" value="1"/>
</dbReference>
<dbReference type="PROSITE" id="PS00389">
    <property type="entry name" value="ATPASE_DELTA"/>
    <property type="match status" value="1"/>
</dbReference>
<proteinExistence type="inferred from homology"/>
<sequence length="193" mass="20313">MPVADTSQPMSGQPVSAVAERYASSLFELAREAGSVDAVAGDLNRFQAMIDESVDLQRLVTSPAFTSEQQASAIAALCDKAEIGGLVGNFLKLVAANRRLFAVPGMIAAFRMIAARHRGELAADVTSAHALTPAQETELKEALKSATGKTVTMFVTVDPSLLGGLIVKIGSRQIDTSLRTKLSTLKLALKEVG</sequence>
<organism>
    <name type="scientific">Allorhizobium ampelinum (strain ATCC BAA-846 / DSM 112012 / S4)</name>
    <name type="common">Agrobacterium vitis (strain S4)</name>
    <dbReference type="NCBI Taxonomy" id="311402"/>
    <lineage>
        <taxon>Bacteria</taxon>
        <taxon>Pseudomonadati</taxon>
        <taxon>Pseudomonadota</taxon>
        <taxon>Alphaproteobacteria</taxon>
        <taxon>Hyphomicrobiales</taxon>
        <taxon>Rhizobiaceae</taxon>
        <taxon>Rhizobium/Agrobacterium group</taxon>
        <taxon>Allorhizobium</taxon>
        <taxon>Allorhizobium ampelinum</taxon>
    </lineage>
</organism>
<protein>
    <recommendedName>
        <fullName evidence="1">ATP synthase subunit delta</fullName>
    </recommendedName>
    <alternativeName>
        <fullName evidence="1">ATP synthase F(1) sector subunit delta</fullName>
    </alternativeName>
    <alternativeName>
        <fullName evidence="1">F-type ATPase subunit delta</fullName>
        <shortName evidence="1">F-ATPase subunit delta</shortName>
    </alternativeName>
</protein>
<accession>B9JTR5</accession>
<keyword id="KW-0066">ATP synthesis</keyword>
<keyword id="KW-0997">Cell inner membrane</keyword>
<keyword id="KW-1003">Cell membrane</keyword>
<keyword id="KW-0139">CF(1)</keyword>
<keyword id="KW-0375">Hydrogen ion transport</keyword>
<keyword id="KW-0406">Ion transport</keyword>
<keyword id="KW-0472">Membrane</keyword>
<keyword id="KW-1185">Reference proteome</keyword>
<keyword id="KW-0813">Transport</keyword>
<reference key="1">
    <citation type="journal article" date="2009" name="J. Bacteriol.">
        <title>Genome sequences of three Agrobacterium biovars help elucidate the evolution of multichromosome genomes in bacteria.</title>
        <authorList>
            <person name="Slater S.C."/>
            <person name="Goldman B.S."/>
            <person name="Goodner B."/>
            <person name="Setubal J.C."/>
            <person name="Farrand S.K."/>
            <person name="Nester E.W."/>
            <person name="Burr T.J."/>
            <person name="Banta L."/>
            <person name="Dickerman A.W."/>
            <person name="Paulsen I."/>
            <person name="Otten L."/>
            <person name="Suen G."/>
            <person name="Welch R."/>
            <person name="Almeida N.F."/>
            <person name="Arnold F."/>
            <person name="Burton O.T."/>
            <person name="Du Z."/>
            <person name="Ewing A."/>
            <person name="Godsy E."/>
            <person name="Heisel S."/>
            <person name="Houmiel K.L."/>
            <person name="Jhaveri J."/>
            <person name="Lu J."/>
            <person name="Miller N.M."/>
            <person name="Norton S."/>
            <person name="Chen Q."/>
            <person name="Phoolcharoen W."/>
            <person name="Ohlin V."/>
            <person name="Ondrusek D."/>
            <person name="Pride N."/>
            <person name="Stricklin S.L."/>
            <person name="Sun J."/>
            <person name="Wheeler C."/>
            <person name="Wilson L."/>
            <person name="Zhu H."/>
            <person name="Wood D.W."/>
        </authorList>
    </citation>
    <scope>NUCLEOTIDE SEQUENCE [LARGE SCALE GENOMIC DNA]</scope>
    <source>
        <strain>ATCC BAA-846 / DSM 112012 / S4</strain>
    </source>
</reference>